<name>ISPG_VIBVY</name>
<comment type="function">
    <text evidence="1">Converts 2C-methyl-D-erythritol 2,4-cyclodiphosphate (ME-2,4cPP) into 1-hydroxy-2-methyl-2-(E)-butenyl 4-diphosphate.</text>
</comment>
<comment type="catalytic activity">
    <reaction evidence="1">
        <text>(2E)-4-hydroxy-3-methylbut-2-enyl diphosphate + oxidized [flavodoxin] + H2O + 2 H(+) = 2-C-methyl-D-erythritol 2,4-cyclic diphosphate + reduced [flavodoxin]</text>
        <dbReference type="Rhea" id="RHEA:43604"/>
        <dbReference type="Rhea" id="RHEA-COMP:10622"/>
        <dbReference type="Rhea" id="RHEA-COMP:10623"/>
        <dbReference type="ChEBI" id="CHEBI:15377"/>
        <dbReference type="ChEBI" id="CHEBI:15378"/>
        <dbReference type="ChEBI" id="CHEBI:57618"/>
        <dbReference type="ChEBI" id="CHEBI:58210"/>
        <dbReference type="ChEBI" id="CHEBI:58483"/>
        <dbReference type="ChEBI" id="CHEBI:128753"/>
        <dbReference type="EC" id="1.17.7.3"/>
    </reaction>
</comment>
<comment type="cofactor">
    <cofactor evidence="1">
        <name>[4Fe-4S] cluster</name>
        <dbReference type="ChEBI" id="CHEBI:49883"/>
    </cofactor>
    <text evidence="1">Binds 1 [4Fe-4S] cluster.</text>
</comment>
<comment type="pathway">
    <text evidence="1">Isoprenoid biosynthesis; isopentenyl diphosphate biosynthesis via DXP pathway; isopentenyl diphosphate from 1-deoxy-D-xylulose 5-phosphate: step 5/6.</text>
</comment>
<comment type="similarity">
    <text evidence="1">Belongs to the IspG family.</text>
</comment>
<gene>
    <name evidence="1" type="primary">ispG</name>
    <name type="ordered locus">VV0766</name>
</gene>
<organism>
    <name type="scientific">Vibrio vulnificus (strain YJ016)</name>
    <dbReference type="NCBI Taxonomy" id="196600"/>
    <lineage>
        <taxon>Bacteria</taxon>
        <taxon>Pseudomonadati</taxon>
        <taxon>Pseudomonadota</taxon>
        <taxon>Gammaproteobacteria</taxon>
        <taxon>Vibrionales</taxon>
        <taxon>Vibrionaceae</taxon>
        <taxon>Vibrio</taxon>
    </lineage>
</organism>
<sequence>MHNESPIIRRKSTRIYVGDVPIGDGAPIAVQSMTNTRTTDVAATVAQIKALENVGADIVRVSVPTMDAAEAFKLIKQQVSIPLVADIHFDYRIALKVAEYGVDCLRINPGNIGNEERIRSVVDCARDKNIPIRIGVNGGSLEKDLQMKYGEPTPEALVESAMRHVDILDRLNFDQFKVSVKASDVFLAVDSYRLLAKKIDQPLHLGITEAGGARAGAVKSAVGLGMLLAEGIGDTLRISLAANPVEEIKVGFDILKSLRIRSRGINFIACPSCSRQEFDVISTVNALEERLEDIITPMDVSIIGCVVNGPGEAEVSHLGLAGSNKKSAFYEDGKRQKERFDNEDLVNQLEAKIRAKAARMDESNRIDIKVQN</sequence>
<keyword id="KW-0004">4Fe-4S</keyword>
<keyword id="KW-0408">Iron</keyword>
<keyword id="KW-0411">Iron-sulfur</keyword>
<keyword id="KW-0414">Isoprene biosynthesis</keyword>
<keyword id="KW-0479">Metal-binding</keyword>
<keyword id="KW-0560">Oxidoreductase</keyword>
<reference key="1">
    <citation type="journal article" date="2003" name="Genome Res.">
        <title>Comparative genome analysis of Vibrio vulnificus, a marine pathogen.</title>
        <authorList>
            <person name="Chen C.-Y."/>
            <person name="Wu K.-M."/>
            <person name="Chang Y.-C."/>
            <person name="Chang C.-H."/>
            <person name="Tsai H.-C."/>
            <person name="Liao T.-L."/>
            <person name="Liu Y.-M."/>
            <person name="Chen H.-J."/>
            <person name="Shen A.B.-T."/>
            <person name="Li J.-C."/>
            <person name="Su T.-L."/>
            <person name="Shao C.-P."/>
            <person name="Lee C.-T."/>
            <person name="Hor L.-I."/>
            <person name="Tsai S.-F."/>
        </authorList>
    </citation>
    <scope>NUCLEOTIDE SEQUENCE [LARGE SCALE GENOMIC DNA]</scope>
    <source>
        <strain>YJ016</strain>
    </source>
</reference>
<evidence type="ECO:0000255" key="1">
    <source>
        <dbReference type="HAMAP-Rule" id="MF_00159"/>
    </source>
</evidence>
<protein>
    <recommendedName>
        <fullName evidence="1">4-hydroxy-3-methylbut-2-en-1-yl diphosphate synthase (flavodoxin)</fullName>
        <ecNumber evidence="1">1.17.7.3</ecNumber>
    </recommendedName>
    <alternativeName>
        <fullName evidence="1">1-hydroxy-2-methyl-2-(E)-butenyl 4-diphosphate synthase</fullName>
    </alternativeName>
</protein>
<accession>Q7MNF1</accession>
<feature type="chain" id="PRO_0000190655" description="4-hydroxy-3-methylbut-2-en-1-yl diphosphate synthase (flavodoxin)">
    <location>
        <begin position="1"/>
        <end position="372"/>
    </location>
</feature>
<feature type="binding site" evidence="1">
    <location>
        <position position="270"/>
    </location>
    <ligand>
        <name>[4Fe-4S] cluster</name>
        <dbReference type="ChEBI" id="CHEBI:49883"/>
    </ligand>
</feature>
<feature type="binding site" evidence="1">
    <location>
        <position position="273"/>
    </location>
    <ligand>
        <name>[4Fe-4S] cluster</name>
        <dbReference type="ChEBI" id="CHEBI:49883"/>
    </ligand>
</feature>
<feature type="binding site" evidence="1">
    <location>
        <position position="305"/>
    </location>
    <ligand>
        <name>[4Fe-4S] cluster</name>
        <dbReference type="ChEBI" id="CHEBI:49883"/>
    </ligand>
</feature>
<feature type="binding site" evidence="1">
    <location>
        <position position="312"/>
    </location>
    <ligand>
        <name>[4Fe-4S] cluster</name>
        <dbReference type="ChEBI" id="CHEBI:49883"/>
    </ligand>
</feature>
<dbReference type="EC" id="1.17.7.3" evidence="1"/>
<dbReference type="EMBL" id="BA000037">
    <property type="protein sequence ID" value="BAC93530.1"/>
    <property type="molecule type" value="Genomic_DNA"/>
</dbReference>
<dbReference type="RefSeq" id="WP_011078526.1">
    <property type="nucleotide sequence ID" value="NC_005139.1"/>
</dbReference>
<dbReference type="SMR" id="Q7MNF1"/>
<dbReference type="STRING" id="672.VV93_v1c07120"/>
<dbReference type="GeneID" id="93894732"/>
<dbReference type="KEGG" id="vvy:VV0766"/>
<dbReference type="eggNOG" id="COG0821">
    <property type="taxonomic scope" value="Bacteria"/>
</dbReference>
<dbReference type="HOGENOM" id="CLU_042258_0_0_6"/>
<dbReference type="UniPathway" id="UPA00056">
    <property type="reaction ID" value="UER00096"/>
</dbReference>
<dbReference type="Proteomes" id="UP000002675">
    <property type="component" value="Chromosome I"/>
</dbReference>
<dbReference type="GO" id="GO:0051539">
    <property type="term" value="F:4 iron, 4 sulfur cluster binding"/>
    <property type="evidence" value="ECO:0007669"/>
    <property type="project" value="UniProtKB-UniRule"/>
</dbReference>
<dbReference type="GO" id="GO:0046429">
    <property type="term" value="F:4-hydroxy-3-methylbut-2-en-1-yl diphosphate synthase activity (ferredoxin)"/>
    <property type="evidence" value="ECO:0007669"/>
    <property type="project" value="UniProtKB-UniRule"/>
</dbReference>
<dbReference type="GO" id="GO:0141197">
    <property type="term" value="F:4-hydroxy-3-methylbut-2-enyl-diphosphate synthase activity (flavodoxin)"/>
    <property type="evidence" value="ECO:0007669"/>
    <property type="project" value="UniProtKB-EC"/>
</dbReference>
<dbReference type="GO" id="GO:0005506">
    <property type="term" value="F:iron ion binding"/>
    <property type="evidence" value="ECO:0007669"/>
    <property type="project" value="InterPro"/>
</dbReference>
<dbReference type="GO" id="GO:0019288">
    <property type="term" value="P:isopentenyl diphosphate biosynthetic process, methylerythritol 4-phosphate pathway"/>
    <property type="evidence" value="ECO:0007669"/>
    <property type="project" value="UniProtKB-UniRule"/>
</dbReference>
<dbReference type="GO" id="GO:0016114">
    <property type="term" value="P:terpenoid biosynthetic process"/>
    <property type="evidence" value="ECO:0007669"/>
    <property type="project" value="InterPro"/>
</dbReference>
<dbReference type="FunFam" id="3.20.20.20:FF:000001">
    <property type="entry name" value="4-hydroxy-3-methylbut-2-en-1-yl diphosphate synthase (flavodoxin)"/>
    <property type="match status" value="1"/>
</dbReference>
<dbReference type="FunFam" id="3.30.413.10:FF:000002">
    <property type="entry name" value="4-hydroxy-3-methylbut-2-en-1-yl diphosphate synthase (flavodoxin)"/>
    <property type="match status" value="1"/>
</dbReference>
<dbReference type="Gene3D" id="3.20.20.20">
    <property type="entry name" value="Dihydropteroate synthase-like"/>
    <property type="match status" value="1"/>
</dbReference>
<dbReference type="Gene3D" id="3.30.413.10">
    <property type="entry name" value="Sulfite Reductase Hemoprotein, domain 1"/>
    <property type="match status" value="1"/>
</dbReference>
<dbReference type="HAMAP" id="MF_00159">
    <property type="entry name" value="IspG"/>
    <property type="match status" value="1"/>
</dbReference>
<dbReference type="InterPro" id="IPR011005">
    <property type="entry name" value="Dihydropteroate_synth-like_sf"/>
</dbReference>
<dbReference type="InterPro" id="IPR016425">
    <property type="entry name" value="IspG_bac"/>
</dbReference>
<dbReference type="InterPro" id="IPR004588">
    <property type="entry name" value="IspG_bac-typ"/>
</dbReference>
<dbReference type="InterPro" id="IPR045854">
    <property type="entry name" value="NO2/SO3_Rdtase_4Fe4S_sf"/>
</dbReference>
<dbReference type="NCBIfam" id="TIGR00612">
    <property type="entry name" value="ispG_gcpE"/>
    <property type="match status" value="1"/>
</dbReference>
<dbReference type="NCBIfam" id="NF001540">
    <property type="entry name" value="PRK00366.1"/>
    <property type="match status" value="1"/>
</dbReference>
<dbReference type="PANTHER" id="PTHR30454">
    <property type="entry name" value="4-HYDROXY-3-METHYLBUT-2-EN-1-YL DIPHOSPHATE SYNTHASE"/>
    <property type="match status" value="1"/>
</dbReference>
<dbReference type="PANTHER" id="PTHR30454:SF0">
    <property type="entry name" value="4-HYDROXY-3-METHYLBUT-2-EN-1-YL DIPHOSPHATE SYNTHASE (FERREDOXIN), CHLOROPLASTIC"/>
    <property type="match status" value="1"/>
</dbReference>
<dbReference type="Pfam" id="PF04551">
    <property type="entry name" value="GcpE"/>
    <property type="match status" value="1"/>
</dbReference>
<dbReference type="PIRSF" id="PIRSF004640">
    <property type="entry name" value="IspG"/>
    <property type="match status" value="1"/>
</dbReference>
<dbReference type="SUPFAM" id="SSF51717">
    <property type="entry name" value="Dihydropteroate synthetase-like"/>
    <property type="match status" value="1"/>
</dbReference>
<dbReference type="SUPFAM" id="SSF56014">
    <property type="entry name" value="Nitrite and sulphite reductase 4Fe-4S domain-like"/>
    <property type="match status" value="1"/>
</dbReference>
<proteinExistence type="inferred from homology"/>